<organism>
    <name type="scientific">Pectobacterium atrosepticum (strain SCRI 1043 / ATCC BAA-672)</name>
    <name type="common">Erwinia carotovora subsp. atroseptica</name>
    <dbReference type="NCBI Taxonomy" id="218491"/>
    <lineage>
        <taxon>Bacteria</taxon>
        <taxon>Pseudomonadati</taxon>
        <taxon>Pseudomonadota</taxon>
        <taxon>Gammaproteobacteria</taxon>
        <taxon>Enterobacterales</taxon>
        <taxon>Pectobacteriaceae</taxon>
        <taxon>Pectobacterium</taxon>
    </lineage>
</organism>
<sequence length="333" mass="36921">MIERIWSGQSRLYWLLLPLSWLYGLITFLIRQSYRLGWRKSWRSPVPIVVVGNLTAGGNGKTPVVIWLVEQLQRRGYRVGVVSRGYGGKAERYPLLLNESVTTVQAGDEPVLIFQRTGAPVAVAPRRAEAVSALLARHTLDVVITDDGLQHYALARDIELVVIDGMRRFGNGWWLPAGPMRERESRLASVDAVVVNGGVPQTNEIGMTLTAGMAVNLLSGESRSLSQLYDVVAMAGIGHPPRFFATLRDAGVSIAREVAFADHQSYQPEQLALLTQDTMQPLLMTEKDAVKCKAFAQDNWWYLPVDAVLAEPQGTQLLDKLEDMLNRNVGSRT</sequence>
<proteinExistence type="inferred from homology"/>
<reference key="1">
    <citation type="journal article" date="2004" name="Proc. Natl. Acad. Sci. U.S.A.">
        <title>Genome sequence of the enterobacterial phytopathogen Erwinia carotovora subsp. atroseptica and characterization of virulence factors.</title>
        <authorList>
            <person name="Bell K.S."/>
            <person name="Sebaihia M."/>
            <person name="Pritchard L."/>
            <person name="Holden M.T.G."/>
            <person name="Hyman L.J."/>
            <person name="Holeva M.C."/>
            <person name="Thomson N.R."/>
            <person name="Bentley S.D."/>
            <person name="Churcher L.J.C."/>
            <person name="Mungall K."/>
            <person name="Atkin R."/>
            <person name="Bason N."/>
            <person name="Brooks K."/>
            <person name="Chillingworth T."/>
            <person name="Clark K."/>
            <person name="Doggett J."/>
            <person name="Fraser A."/>
            <person name="Hance Z."/>
            <person name="Hauser H."/>
            <person name="Jagels K."/>
            <person name="Moule S."/>
            <person name="Norbertczak H."/>
            <person name="Ormond D."/>
            <person name="Price C."/>
            <person name="Quail M.A."/>
            <person name="Sanders M."/>
            <person name="Walker D."/>
            <person name="Whitehead S."/>
            <person name="Salmond G.P.C."/>
            <person name="Birch P.R.J."/>
            <person name="Parkhill J."/>
            <person name="Toth I.K."/>
        </authorList>
    </citation>
    <scope>NUCLEOTIDE SEQUENCE [LARGE SCALE GENOMIC DNA]</scope>
    <source>
        <strain>SCRI 1043 / ATCC BAA-672</strain>
    </source>
</reference>
<comment type="function">
    <text evidence="1">Transfers the gamma-phosphate of ATP to the 4'-position of a tetraacyldisaccharide 1-phosphate intermediate (termed DS-1-P) to form tetraacyldisaccharide 1,4'-bis-phosphate (lipid IVA).</text>
</comment>
<comment type="catalytic activity">
    <reaction evidence="1">
        <text>a lipid A disaccharide + ATP = a lipid IVA + ADP + H(+)</text>
        <dbReference type="Rhea" id="RHEA:67840"/>
        <dbReference type="ChEBI" id="CHEBI:15378"/>
        <dbReference type="ChEBI" id="CHEBI:30616"/>
        <dbReference type="ChEBI" id="CHEBI:176343"/>
        <dbReference type="ChEBI" id="CHEBI:176425"/>
        <dbReference type="ChEBI" id="CHEBI:456216"/>
        <dbReference type="EC" id="2.7.1.130"/>
    </reaction>
</comment>
<comment type="pathway">
    <text evidence="1">Glycolipid biosynthesis; lipid IV(A) biosynthesis; lipid IV(A) from (3R)-3-hydroxytetradecanoyl-[acyl-carrier-protein] and UDP-N-acetyl-alpha-D-glucosamine: step 6/6.</text>
</comment>
<comment type="similarity">
    <text evidence="1">Belongs to the LpxK family.</text>
</comment>
<gene>
    <name evidence="1" type="primary">lpxK</name>
    <name type="ordered locus">ECA2556</name>
</gene>
<keyword id="KW-0067">ATP-binding</keyword>
<keyword id="KW-0418">Kinase</keyword>
<keyword id="KW-0441">Lipid A biosynthesis</keyword>
<keyword id="KW-0444">Lipid biosynthesis</keyword>
<keyword id="KW-0443">Lipid metabolism</keyword>
<keyword id="KW-0547">Nucleotide-binding</keyword>
<keyword id="KW-1185">Reference proteome</keyword>
<keyword id="KW-0808">Transferase</keyword>
<protein>
    <recommendedName>
        <fullName evidence="1">Tetraacyldisaccharide 4'-kinase</fullName>
        <ecNumber evidence="1">2.7.1.130</ecNumber>
    </recommendedName>
    <alternativeName>
        <fullName evidence="1">Lipid A 4'-kinase</fullName>
    </alternativeName>
</protein>
<name>LPXK_PECAS</name>
<evidence type="ECO:0000255" key="1">
    <source>
        <dbReference type="HAMAP-Rule" id="MF_00409"/>
    </source>
</evidence>
<dbReference type="EC" id="2.7.1.130" evidence="1"/>
<dbReference type="EMBL" id="BX950851">
    <property type="protein sequence ID" value="CAG75455.1"/>
    <property type="molecule type" value="Genomic_DNA"/>
</dbReference>
<dbReference type="RefSeq" id="WP_011094101.1">
    <property type="nucleotide sequence ID" value="NC_004547.2"/>
</dbReference>
<dbReference type="SMR" id="Q6D438"/>
<dbReference type="STRING" id="218491.ECA2556"/>
<dbReference type="KEGG" id="eca:ECA2556"/>
<dbReference type="PATRIC" id="fig|218491.5.peg.2591"/>
<dbReference type="eggNOG" id="COG1663">
    <property type="taxonomic scope" value="Bacteria"/>
</dbReference>
<dbReference type="HOGENOM" id="CLU_038816_2_0_6"/>
<dbReference type="OrthoDB" id="9766423at2"/>
<dbReference type="UniPathway" id="UPA00359">
    <property type="reaction ID" value="UER00482"/>
</dbReference>
<dbReference type="Proteomes" id="UP000007966">
    <property type="component" value="Chromosome"/>
</dbReference>
<dbReference type="GO" id="GO:0005886">
    <property type="term" value="C:plasma membrane"/>
    <property type="evidence" value="ECO:0007669"/>
    <property type="project" value="TreeGrafter"/>
</dbReference>
<dbReference type="GO" id="GO:0005524">
    <property type="term" value="F:ATP binding"/>
    <property type="evidence" value="ECO:0007669"/>
    <property type="project" value="UniProtKB-UniRule"/>
</dbReference>
<dbReference type="GO" id="GO:0009029">
    <property type="term" value="F:tetraacyldisaccharide 4'-kinase activity"/>
    <property type="evidence" value="ECO:0007669"/>
    <property type="project" value="UniProtKB-UniRule"/>
</dbReference>
<dbReference type="GO" id="GO:0009245">
    <property type="term" value="P:lipid A biosynthetic process"/>
    <property type="evidence" value="ECO:0007669"/>
    <property type="project" value="UniProtKB-UniRule"/>
</dbReference>
<dbReference type="GO" id="GO:0009244">
    <property type="term" value="P:lipopolysaccharide core region biosynthetic process"/>
    <property type="evidence" value="ECO:0007669"/>
    <property type="project" value="TreeGrafter"/>
</dbReference>
<dbReference type="HAMAP" id="MF_00409">
    <property type="entry name" value="LpxK"/>
    <property type="match status" value="1"/>
</dbReference>
<dbReference type="InterPro" id="IPR003758">
    <property type="entry name" value="LpxK"/>
</dbReference>
<dbReference type="InterPro" id="IPR027417">
    <property type="entry name" value="P-loop_NTPase"/>
</dbReference>
<dbReference type="NCBIfam" id="TIGR00682">
    <property type="entry name" value="lpxK"/>
    <property type="match status" value="1"/>
</dbReference>
<dbReference type="PANTHER" id="PTHR42724">
    <property type="entry name" value="TETRAACYLDISACCHARIDE 4'-KINASE"/>
    <property type="match status" value="1"/>
</dbReference>
<dbReference type="PANTHER" id="PTHR42724:SF1">
    <property type="entry name" value="TETRAACYLDISACCHARIDE 4'-KINASE, MITOCHONDRIAL-RELATED"/>
    <property type="match status" value="1"/>
</dbReference>
<dbReference type="Pfam" id="PF02606">
    <property type="entry name" value="LpxK"/>
    <property type="match status" value="1"/>
</dbReference>
<dbReference type="SUPFAM" id="SSF52540">
    <property type="entry name" value="P-loop containing nucleoside triphosphate hydrolases"/>
    <property type="match status" value="1"/>
</dbReference>
<accession>Q6D438</accession>
<feature type="chain" id="PRO_0000229955" description="Tetraacyldisaccharide 4'-kinase">
    <location>
        <begin position="1"/>
        <end position="333"/>
    </location>
</feature>
<feature type="binding site" evidence="1">
    <location>
        <begin position="55"/>
        <end position="62"/>
    </location>
    <ligand>
        <name>ATP</name>
        <dbReference type="ChEBI" id="CHEBI:30616"/>
    </ligand>
</feature>